<gene>
    <name type="primary">Ngly1</name>
</gene>
<protein>
    <recommendedName>
        <fullName>Peptide-N(4)-(N-acetyl-beta-glucosaminyl)asparagine amidase</fullName>
        <shortName>PNGase</shortName>
        <shortName>mPNGase</shortName>
        <ecNumber>3.5.1.52</ecNumber>
    </recommendedName>
    <alternativeName>
        <fullName>N-glycanase 1</fullName>
    </alternativeName>
    <alternativeName>
        <fullName>Peptide:N-glycanase</fullName>
    </alternativeName>
</protein>
<name>NGLY1_MOUSE</name>
<proteinExistence type="evidence at protein level"/>
<sequence length="651" mass="74275">MASATLGSSSSSASPAVAELCQNTPETFLEASKLLLTYADNILRNPSDEKYRSIRIGNTAFSTRLLPVRGAVECLFEMGFEEGETHLIFPKKASVEQLQKIRDLIAIERSSRLDGSSKKVQFSQHPAAAKLPLEQSEDPAGLIRHSGNQTGQLPSLPSAPMVVGDSTILKVLQSNIQHVQLYENPVLQEKALTCIPVSELKRKAQEKLFRARKLDKGTNVSDEDFLLLELLHWFKEEFFRWVNNIVCSKCGGETRSRDEALLPNDDELKWGAKNVENHYCDACQLSNRFPRYNNPEKLLETRCGRCGEWANCFTLCCRALGFEARYVWDYTDHVWTEVYSPSQQRWLHCDACEDVCDKPLLYEIGWGKKLSYIIAFSKDEVVDVTWRYSCKHDEVMSRRTKVKEELLRETINGLNKQRQLSLSESRRKELLQRIIVELVEFISPKTPRPGELGGRVSGSLAWRVARGETGLERKEILFIPSENEKISKQFHLRYDIVRDRYIRVSDNNINISGWENGVWKMESIFRKVEKDWNMVYLARKEGSSFAYISWKFECGSAGLKVDTVSIRTSSQSFESGSVRWKLRSETAQVNLLGDKNLRSYNDFSGATEVTLEAELSRGDGDVAWQHTQLFRQSLNDSGENGLEIIITFNDL</sequence>
<feature type="initiator methionine" description="Removed" evidence="1">
    <location>
        <position position="1"/>
    </location>
</feature>
<feature type="chain" id="PRO_0000248973" description="Peptide-N(4)-(N-acetyl-beta-glucosaminyl)asparagine amidase">
    <location>
        <begin position="2"/>
        <end position="651"/>
    </location>
</feature>
<feature type="domain" description="PUB">
    <location>
        <begin position="30"/>
        <end position="91"/>
    </location>
</feature>
<feature type="domain" description="PAW" evidence="2">
    <location>
        <begin position="451"/>
        <end position="651"/>
    </location>
</feature>
<feature type="active site" description="Nucleophile">
    <location>
        <position position="306"/>
    </location>
</feature>
<feature type="active site">
    <location>
        <position position="333"/>
    </location>
</feature>
<feature type="active site">
    <location>
        <position position="350"/>
    </location>
</feature>
<feature type="binding site">
    <location>
        <position position="247"/>
    </location>
    <ligand>
        <name>Zn(2+)</name>
        <dbReference type="ChEBI" id="CHEBI:29105"/>
    </ligand>
</feature>
<feature type="binding site">
    <location>
        <position position="250"/>
    </location>
    <ligand>
        <name>Zn(2+)</name>
        <dbReference type="ChEBI" id="CHEBI:29105"/>
    </ligand>
</feature>
<feature type="binding site">
    <location>
        <position position="280"/>
    </location>
    <ligand>
        <name>Zn(2+)</name>
        <dbReference type="ChEBI" id="CHEBI:29105"/>
    </ligand>
</feature>
<feature type="binding site">
    <location>
        <position position="283"/>
    </location>
    <ligand>
        <name>Zn(2+)</name>
        <dbReference type="ChEBI" id="CHEBI:29105"/>
    </ligand>
</feature>
<feature type="modified residue" description="N-acetylalanine" evidence="1">
    <location>
        <position position="2"/>
    </location>
</feature>
<feature type="mutagenesis site" description="Abolishes interaction with VCP." evidence="11">
    <original>N</original>
    <variation>P</variation>
    <location>
        <position position="41"/>
    </location>
</feature>
<feature type="mutagenesis site" description="Does not affect the interaction with VCP." evidence="11">
    <original>N</original>
    <variation>A</variation>
    <location>
        <position position="58"/>
    </location>
</feature>
<feature type="mutagenesis site" description="Abolishes interaction with VCP." evidence="11">
    <original>GF</original>
    <variation>AA</variation>
    <location>
        <begin position="79"/>
        <end position="80"/>
    </location>
</feature>
<feature type="mutagenesis site" description="Abolishes enzyme activity." evidence="4">
    <original>C</original>
    <variation>A</variation>
    <location>
        <position position="306"/>
    </location>
</feature>
<feature type="sequence conflict" description="In Ref. 1; AAF74723 and 2; AAP03060." evidence="13" ref="1 2">
    <original>I</original>
    <variation>T</variation>
    <location>
        <position position="509"/>
    </location>
</feature>
<feature type="helix" evidence="19">
    <location>
        <begin position="15"/>
        <end position="20"/>
    </location>
</feature>
<feature type="helix" evidence="19">
    <location>
        <begin position="25"/>
        <end position="43"/>
    </location>
</feature>
<feature type="strand" evidence="14">
    <location>
        <begin position="45"/>
        <end position="47"/>
    </location>
</feature>
<feature type="helix" evidence="19">
    <location>
        <begin position="49"/>
        <end position="52"/>
    </location>
</feature>
<feature type="strand" evidence="19">
    <location>
        <begin position="53"/>
        <end position="55"/>
    </location>
</feature>
<feature type="helix" evidence="19">
    <location>
        <begin position="59"/>
        <end position="64"/>
    </location>
</feature>
<feature type="turn" evidence="19">
    <location>
        <begin position="65"/>
        <end position="67"/>
    </location>
</feature>
<feature type="helix" evidence="19">
    <location>
        <begin position="71"/>
        <end position="78"/>
    </location>
</feature>
<feature type="strand" evidence="19">
    <location>
        <begin position="84"/>
        <end position="88"/>
    </location>
</feature>
<feature type="helix" evidence="19">
    <location>
        <begin position="95"/>
        <end position="109"/>
    </location>
</feature>
<feature type="helix" evidence="15">
    <location>
        <begin position="167"/>
        <end position="180"/>
    </location>
</feature>
<feature type="helix" evidence="15">
    <location>
        <begin position="181"/>
        <end position="183"/>
    </location>
</feature>
<feature type="helix" evidence="15">
    <location>
        <begin position="185"/>
        <end position="194"/>
    </location>
</feature>
<feature type="helix" evidence="15">
    <location>
        <begin position="197"/>
        <end position="211"/>
    </location>
</feature>
<feature type="helix" evidence="15">
    <location>
        <begin position="223"/>
        <end position="236"/>
    </location>
</feature>
<feature type="turn" evidence="15">
    <location>
        <begin position="248"/>
        <end position="250"/>
    </location>
</feature>
<feature type="strand" evidence="16">
    <location>
        <begin position="255"/>
        <end position="261"/>
    </location>
</feature>
<feature type="helix" evidence="15">
    <location>
        <begin position="266"/>
        <end position="269"/>
    </location>
</feature>
<feature type="strand" evidence="15">
    <location>
        <begin position="275"/>
        <end position="280"/>
    </location>
</feature>
<feature type="turn" evidence="15">
    <location>
        <begin position="281"/>
        <end position="284"/>
    </location>
</feature>
<feature type="strand" evidence="15">
    <location>
        <begin position="285"/>
        <end position="290"/>
    </location>
</feature>
<feature type="helix" evidence="15">
    <location>
        <begin position="295"/>
        <end position="301"/>
    </location>
</feature>
<feature type="strand" evidence="15">
    <location>
        <begin position="303"/>
        <end position="305"/>
    </location>
</feature>
<feature type="helix" evidence="15">
    <location>
        <begin position="306"/>
        <end position="319"/>
    </location>
</feature>
<feature type="strand" evidence="15">
    <location>
        <begin position="324"/>
        <end position="329"/>
    </location>
</feature>
<feature type="turn" evidence="15">
    <location>
        <begin position="330"/>
        <end position="332"/>
    </location>
</feature>
<feature type="strand" evidence="15">
    <location>
        <begin position="333"/>
        <end position="340"/>
    </location>
</feature>
<feature type="turn" evidence="15">
    <location>
        <begin position="341"/>
        <end position="344"/>
    </location>
</feature>
<feature type="strand" evidence="15">
    <location>
        <begin position="345"/>
        <end position="350"/>
    </location>
</feature>
<feature type="turn" evidence="15">
    <location>
        <begin position="351"/>
        <end position="354"/>
    </location>
</feature>
<feature type="strand" evidence="15">
    <location>
        <begin position="355"/>
        <end position="357"/>
    </location>
</feature>
<feature type="helix" evidence="15">
    <location>
        <begin position="359"/>
        <end position="361"/>
    </location>
</feature>
<feature type="turn" evidence="15">
    <location>
        <begin position="362"/>
        <end position="365"/>
    </location>
</feature>
<feature type="strand" evidence="15">
    <location>
        <begin position="373"/>
        <end position="376"/>
    </location>
</feature>
<feature type="strand" evidence="15">
    <location>
        <begin position="381"/>
        <end position="383"/>
    </location>
</feature>
<feature type="helix" evidence="15">
    <location>
        <begin position="385"/>
        <end position="388"/>
    </location>
</feature>
<feature type="helix" evidence="15">
    <location>
        <begin position="392"/>
        <end position="398"/>
    </location>
</feature>
<feature type="helix" evidence="15">
    <location>
        <begin position="404"/>
        <end position="419"/>
    </location>
</feature>
<feature type="helix" evidence="15">
    <location>
        <begin position="424"/>
        <end position="441"/>
    </location>
</feature>
<feature type="strand" evidence="18">
    <location>
        <begin position="458"/>
        <end position="462"/>
    </location>
</feature>
<feature type="helix" evidence="20">
    <location>
        <begin position="482"/>
        <end position="487"/>
    </location>
</feature>
<feature type="strand" evidence="20">
    <location>
        <begin position="489"/>
        <end position="495"/>
    </location>
</feature>
<feature type="turn" evidence="20">
    <location>
        <begin position="496"/>
        <end position="499"/>
    </location>
</feature>
<feature type="strand" evidence="20">
    <location>
        <begin position="500"/>
        <end position="503"/>
    </location>
</feature>
<feature type="helix" evidence="17">
    <location>
        <begin position="504"/>
        <end position="506"/>
    </location>
</feature>
<feature type="strand" evidence="20">
    <location>
        <begin position="509"/>
        <end position="513"/>
    </location>
</feature>
<feature type="helix" evidence="20">
    <location>
        <begin position="514"/>
        <end position="517"/>
    </location>
</feature>
<feature type="strand" evidence="20">
    <location>
        <begin position="519"/>
        <end position="529"/>
    </location>
</feature>
<feature type="turn" evidence="20">
    <location>
        <begin position="530"/>
        <end position="533"/>
    </location>
</feature>
<feature type="strand" evidence="20">
    <location>
        <begin position="534"/>
        <end position="539"/>
    </location>
</feature>
<feature type="strand" evidence="20">
    <location>
        <begin position="544"/>
        <end position="553"/>
    </location>
</feature>
<feature type="helix" evidence="20">
    <location>
        <begin position="555"/>
        <end position="557"/>
    </location>
</feature>
<feature type="strand" evidence="20">
    <location>
        <begin position="559"/>
        <end position="567"/>
    </location>
</feature>
<feature type="strand" evidence="20">
    <location>
        <begin position="569"/>
        <end position="572"/>
    </location>
</feature>
<feature type="strand" evidence="20">
    <location>
        <begin position="577"/>
        <end position="583"/>
    </location>
</feature>
<feature type="strand" evidence="20">
    <location>
        <begin position="588"/>
        <end position="591"/>
    </location>
</feature>
<feature type="strand" evidence="20">
    <location>
        <begin position="598"/>
        <end position="600"/>
    </location>
</feature>
<feature type="turn" evidence="20">
    <location>
        <begin position="602"/>
        <end position="605"/>
    </location>
</feature>
<feature type="strand" evidence="20">
    <location>
        <begin position="607"/>
        <end position="616"/>
    </location>
</feature>
<feature type="helix" evidence="20">
    <location>
        <begin position="620"/>
        <end position="625"/>
    </location>
</feature>
<feature type="strand" evidence="20">
    <location>
        <begin position="626"/>
        <end position="633"/>
    </location>
</feature>
<feature type="strand" evidence="20">
    <location>
        <begin position="641"/>
        <end position="650"/>
    </location>
</feature>
<evidence type="ECO:0000250" key="1">
    <source>
        <dbReference type="UniProtKB" id="Q96IV0"/>
    </source>
</evidence>
<evidence type="ECO:0000255" key="2">
    <source>
        <dbReference type="PROSITE-ProRule" id="PRU00731"/>
    </source>
</evidence>
<evidence type="ECO:0000269" key="3">
    <source>
    </source>
</evidence>
<evidence type="ECO:0000269" key="4">
    <source>
    </source>
</evidence>
<evidence type="ECO:0000269" key="5">
    <source>
    </source>
</evidence>
<evidence type="ECO:0000269" key="6">
    <source>
    </source>
</evidence>
<evidence type="ECO:0000269" key="7">
    <source>
    </source>
</evidence>
<evidence type="ECO:0000269" key="8">
    <source>
    </source>
</evidence>
<evidence type="ECO:0000269" key="9">
    <source>
    </source>
</evidence>
<evidence type="ECO:0000269" key="10">
    <source>
    </source>
</evidence>
<evidence type="ECO:0000269" key="11">
    <source>
    </source>
</evidence>
<evidence type="ECO:0000269" key="12">
    <source>
    </source>
</evidence>
<evidence type="ECO:0000305" key="13"/>
<evidence type="ECO:0007829" key="14">
    <source>
        <dbReference type="PDB" id="2D5U"/>
    </source>
</evidence>
<evidence type="ECO:0007829" key="15">
    <source>
        <dbReference type="PDB" id="2F4M"/>
    </source>
</evidence>
<evidence type="ECO:0007829" key="16">
    <source>
        <dbReference type="PDB" id="2F4O"/>
    </source>
</evidence>
<evidence type="ECO:0007829" key="17">
    <source>
        <dbReference type="PDB" id="2G9F"/>
    </source>
</evidence>
<evidence type="ECO:0007829" key="18">
    <source>
        <dbReference type="PDB" id="2G9G"/>
    </source>
</evidence>
<evidence type="ECO:0007829" key="19">
    <source>
        <dbReference type="PDB" id="2HPJ"/>
    </source>
</evidence>
<evidence type="ECO:0007829" key="20">
    <source>
        <dbReference type="PDB" id="2I74"/>
    </source>
</evidence>
<accession>Q9JI78</accession>
<accession>Q8K113</accession>
<accession>Q9CTK3</accession>
<dbReference type="EC" id="3.5.1.52"/>
<dbReference type="EMBL" id="AF250927">
    <property type="protein sequence ID" value="AAF74723.1"/>
    <property type="molecule type" value="mRNA"/>
</dbReference>
<dbReference type="EMBL" id="AY225417">
    <property type="protein sequence ID" value="AAP03060.1"/>
    <property type="molecule type" value="Genomic_DNA"/>
</dbReference>
<dbReference type="EMBL" id="AK003279">
    <property type="protein sequence ID" value="BAB22686.1"/>
    <property type="molecule type" value="mRNA"/>
</dbReference>
<dbReference type="EMBL" id="AK028248">
    <property type="protein sequence ID" value="BAC25839.1"/>
    <property type="molecule type" value="mRNA"/>
</dbReference>
<dbReference type="EMBL" id="BC028961">
    <property type="protein sequence ID" value="AAH28961.1"/>
    <property type="molecule type" value="mRNA"/>
</dbReference>
<dbReference type="CCDS" id="CCDS26832.1"/>
<dbReference type="RefSeq" id="NP_067479.2">
    <property type="nucleotide sequence ID" value="NM_021504.3"/>
</dbReference>
<dbReference type="PDB" id="2D5U">
    <property type="method" value="NMR"/>
    <property type="chains" value="A=1-119"/>
</dbReference>
<dbReference type="PDB" id="2F4M">
    <property type="method" value="X-ray"/>
    <property type="resolution" value="1.85 A"/>
    <property type="chains" value="A=164-450"/>
</dbReference>
<dbReference type="PDB" id="2F4O">
    <property type="method" value="X-ray"/>
    <property type="resolution" value="2.26 A"/>
    <property type="chains" value="A=164-450"/>
</dbReference>
<dbReference type="PDB" id="2G9F">
    <property type="method" value="X-ray"/>
    <property type="resolution" value="1.90 A"/>
    <property type="chains" value="A=451-651"/>
</dbReference>
<dbReference type="PDB" id="2G9G">
    <property type="method" value="X-ray"/>
    <property type="resolution" value="2.00 A"/>
    <property type="chains" value="A=451-651"/>
</dbReference>
<dbReference type="PDB" id="2HPJ">
    <property type="method" value="X-ray"/>
    <property type="resolution" value="1.70 A"/>
    <property type="chains" value="A=12-110"/>
</dbReference>
<dbReference type="PDB" id="2HPL">
    <property type="method" value="X-ray"/>
    <property type="resolution" value="1.80 A"/>
    <property type="chains" value="A=12-111"/>
</dbReference>
<dbReference type="PDB" id="2I74">
    <property type="method" value="X-ray"/>
    <property type="resolution" value="1.75 A"/>
    <property type="chains" value="A/B=471-651"/>
</dbReference>
<dbReference type="PDBsum" id="2D5U"/>
<dbReference type="PDBsum" id="2F4M"/>
<dbReference type="PDBsum" id="2F4O"/>
<dbReference type="PDBsum" id="2G9F"/>
<dbReference type="PDBsum" id="2G9G"/>
<dbReference type="PDBsum" id="2HPJ"/>
<dbReference type="PDBsum" id="2HPL"/>
<dbReference type="PDBsum" id="2I74"/>
<dbReference type="SMR" id="Q9JI78"/>
<dbReference type="BioGRID" id="208478">
    <property type="interactions" value="14"/>
</dbReference>
<dbReference type="CORUM" id="Q9JI78"/>
<dbReference type="DIP" id="DIP-41155N"/>
<dbReference type="FunCoup" id="Q9JI78">
    <property type="interactions" value="4313"/>
</dbReference>
<dbReference type="IntAct" id="Q9JI78">
    <property type="interactions" value="9"/>
</dbReference>
<dbReference type="MINT" id="Q9JI78"/>
<dbReference type="STRING" id="10090.ENSMUSP00000022310"/>
<dbReference type="GlyGen" id="Q9JI78">
    <property type="glycosylation" value="2 sites, 1 O-linked glycan (1 site)"/>
</dbReference>
<dbReference type="iPTMnet" id="Q9JI78"/>
<dbReference type="PhosphoSitePlus" id="Q9JI78"/>
<dbReference type="SwissPalm" id="Q9JI78"/>
<dbReference type="jPOST" id="Q9JI78"/>
<dbReference type="PaxDb" id="10090-ENSMUSP00000022310"/>
<dbReference type="PeptideAtlas" id="Q9JI78"/>
<dbReference type="ProteomicsDB" id="252834"/>
<dbReference type="Pumba" id="Q9JI78"/>
<dbReference type="Antibodypedia" id="27393">
    <property type="antibodies" value="48 antibodies from 17 providers"/>
</dbReference>
<dbReference type="DNASU" id="59007"/>
<dbReference type="Ensembl" id="ENSMUST00000022310.7">
    <property type="protein sequence ID" value="ENSMUSP00000022310.7"/>
    <property type="gene ID" value="ENSMUSG00000021785.9"/>
</dbReference>
<dbReference type="GeneID" id="59007"/>
<dbReference type="KEGG" id="mmu:59007"/>
<dbReference type="UCSC" id="uc007sgz.1">
    <property type="organism name" value="mouse"/>
</dbReference>
<dbReference type="AGR" id="MGI:1913276"/>
<dbReference type="CTD" id="55768"/>
<dbReference type="MGI" id="MGI:1913276">
    <property type="gene designation" value="Ngly1"/>
</dbReference>
<dbReference type="VEuPathDB" id="HostDB:ENSMUSG00000021785"/>
<dbReference type="eggNOG" id="KOG0909">
    <property type="taxonomic scope" value="Eukaryota"/>
</dbReference>
<dbReference type="GeneTree" id="ENSGT00390000006540"/>
<dbReference type="HOGENOM" id="CLU_030187_1_0_1"/>
<dbReference type="InParanoid" id="Q9JI78"/>
<dbReference type="OMA" id="ENHYCSQ"/>
<dbReference type="OrthoDB" id="409136at2759"/>
<dbReference type="PhylomeDB" id="Q9JI78"/>
<dbReference type="TreeFam" id="TF315254"/>
<dbReference type="BRENDA" id="3.5.1.52">
    <property type="organism ID" value="3474"/>
</dbReference>
<dbReference type="Reactome" id="R-MMU-532668">
    <property type="pathway name" value="N-glycan trimming in the ER and Calnexin/Calreticulin cycle"/>
</dbReference>
<dbReference type="SABIO-RK" id="Q9JI78"/>
<dbReference type="BioGRID-ORCS" id="59007">
    <property type="hits" value="6 hits in 77 CRISPR screens"/>
</dbReference>
<dbReference type="ChiTaRS" id="Ngly1">
    <property type="organism name" value="mouse"/>
</dbReference>
<dbReference type="EvolutionaryTrace" id="Q9JI78"/>
<dbReference type="PRO" id="PR:Q9JI78"/>
<dbReference type="Proteomes" id="UP000000589">
    <property type="component" value="Chromosome 14"/>
</dbReference>
<dbReference type="RNAct" id="Q9JI78">
    <property type="molecule type" value="protein"/>
</dbReference>
<dbReference type="Bgee" id="ENSMUSG00000021785">
    <property type="expression patterns" value="Expressed in interventricular septum and 259 other cell types or tissues"/>
</dbReference>
<dbReference type="ExpressionAtlas" id="Q9JI78">
    <property type="expression patterns" value="baseline and differential"/>
</dbReference>
<dbReference type="GO" id="GO:0062023">
    <property type="term" value="C:collagen-containing extracellular matrix"/>
    <property type="evidence" value="ECO:0007005"/>
    <property type="project" value="BHF-UCL"/>
</dbReference>
<dbReference type="GO" id="GO:0005737">
    <property type="term" value="C:cytoplasm"/>
    <property type="evidence" value="ECO:0000314"/>
    <property type="project" value="UniProtKB"/>
</dbReference>
<dbReference type="GO" id="GO:0005634">
    <property type="term" value="C:nucleus"/>
    <property type="evidence" value="ECO:0000250"/>
    <property type="project" value="MGI"/>
</dbReference>
<dbReference type="GO" id="GO:0046872">
    <property type="term" value="F:metal ion binding"/>
    <property type="evidence" value="ECO:0007669"/>
    <property type="project" value="UniProtKB-KW"/>
</dbReference>
<dbReference type="GO" id="GO:0000224">
    <property type="term" value="F:peptide-N4-(N-acetyl-beta-glucosaminyl)asparagine amidase activity"/>
    <property type="evidence" value="ECO:0000250"/>
    <property type="project" value="MGI"/>
</dbReference>
<dbReference type="GO" id="GO:0006516">
    <property type="term" value="P:glycoprotein catabolic process"/>
    <property type="evidence" value="ECO:0000314"/>
    <property type="project" value="UniProtKB"/>
</dbReference>
<dbReference type="CDD" id="cd10459">
    <property type="entry name" value="PUB_PNGase"/>
    <property type="match status" value="1"/>
</dbReference>
<dbReference type="FunFam" id="1.20.58.2190:FF:000001">
    <property type="entry name" value="peptide-N(4)-(N-acetyl-beta- glucosaminyl)asparagine amidase"/>
    <property type="match status" value="1"/>
</dbReference>
<dbReference type="FunFam" id="2.20.25.10:FF:000011">
    <property type="entry name" value="peptide-N(4)-(N-acetyl-beta- glucosaminyl)asparagine amidase"/>
    <property type="match status" value="1"/>
</dbReference>
<dbReference type="FunFam" id="3.10.620.30:FF:000001">
    <property type="entry name" value="peptide-N(4)-(N-acetyl-beta- glucosaminyl)asparagine amidase"/>
    <property type="match status" value="1"/>
</dbReference>
<dbReference type="FunFam" id="2.60.120.1020:FF:000001">
    <property type="entry name" value="Peptide-N(4)-(N-acetyl-beta-glucosaminyl)asparagine amidase"/>
    <property type="match status" value="1"/>
</dbReference>
<dbReference type="Gene3D" id="1.20.58.2190">
    <property type="match status" value="1"/>
</dbReference>
<dbReference type="Gene3D" id="2.20.25.10">
    <property type="match status" value="1"/>
</dbReference>
<dbReference type="Gene3D" id="3.10.620.30">
    <property type="match status" value="1"/>
</dbReference>
<dbReference type="Gene3D" id="2.60.120.1020">
    <property type="entry name" value="Peptide N glycanase, PAW domain"/>
    <property type="match status" value="1"/>
</dbReference>
<dbReference type="InterPro" id="IPR008979">
    <property type="entry name" value="Galactose-bd-like_sf"/>
</dbReference>
<dbReference type="InterPro" id="IPR038765">
    <property type="entry name" value="Papain-like_cys_pep_sf"/>
</dbReference>
<dbReference type="InterPro" id="IPR038680">
    <property type="entry name" value="PAW_sf"/>
</dbReference>
<dbReference type="InterPro" id="IPR006588">
    <property type="entry name" value="Peptide_N_glycanase_PAW_dom"/>
</dbReference>
<dbReference type="InterPro" id="IPR050883">
    <property type="entry name" value="PNGase"/>
</dbReference>
<dbReference type="InterPro" id="IPR036339">
    <property type="entry name" value="PUB-like_dom_sf"/>
</dbReference>
<dbReference type="InterPro" id="IPR018997">
    <property type="entry name" value="PUB_domain"/>
</dbReference>
<dbReference type="InterPro" id="IPR002931">
    <property type="entry name" value="Transglutaminase-like"/>
</dbReference>
<dbReference type="PANTHER" id="PTHR12143">
    <property type="entry name" value="PEPTIDE N-GLYCANASE PNGASE -RELATED"/>
    <property type="match status" value="1"/>
</dbReference>
<dbReference type="PANTHER" id="PTHR12143:SF19">
    <property type="entry name" value="PEPTIDE-N(4)-(N-ACETYL-BETA-GLUCOSAMINYL)ASPARAGINE AMIDASE"/>
    <property type="match status" value="1"/>
</dbReference>
<dbReference type="Pfam" id="PF04721">
    <property type="entry name" value="PAW"/>
    <property type="match status" value="1"/>
</dbReference>
<dbReference type="Pfam" id="PF09409">
    <property type="entry name" value="PUB"/>
    <property type="match status" value="1"/>
</dbReference>
<dbReference type="Pfam" id="PF01841">
    <property type="entry name" value="Transglut_core"/>
    <property type="match status" value="1"/>
</dbReference>
<dbReference type="SMART" id="SM00613">
    <property type="entry name" value="PAW"/>
    <property type="match status" value="1"/>
</dbReference>
<dbReference type="SMART" id="SM00580">
    <property type="entry name" value="PUG"/>
    <property type="match status" value="1"/>
</dbReference>
<dbReference type="SMART" id="SM00460">
    <property type="entry name" value="TGc"/>
    <property type="match status" value="1"/>
</dbReference>
<dbReference type="SUPFAM" id="SSF54001">
    <property type="entry name" value="Cysteine proteinases"/>
    <property type="match status" value="1"/>
</dbReference>
<dbReference type="SUPFAM" id="SSF49785">
    <property type="entry name" value="Galactose-binding domain-like"/>
    <property type="match status" value="1"/>
</dbReference>
<dbReference type="SUPFAM" id="SSF143503">
    <property type="entry name" value="PUG domain-like"/>
    <property type="match status" value="1"/>
</dbReference>
<dbReference type="PROSITE" id="PS51398">
    <property type="entry name" value="PAW"/>
    <property type="match status" value="1"/>
</dbReference>
<organism>
    <name type="scientific">Mus musculus</name>
    <name type="common">Mouse</name>
    <dbReference type="NCBI Taxonomy" id="10090"/>
    <lineage>
        <taxon>Eukaryota</taxon>
        <taxon>Metazoa</taxon>
        <taxon>Chordata</taxon>
        <taxon>Craniata</taxon>
        <taxon>Vertebrata</taxon>
        <taxon>Euteleostomi</taxon>
        <taxon>Mammalia</taxon>
        <taxon>Eutheria</taxon>
        <taxon>Euarchontoglires</taxon>
        <taxon>Glires</taxon>
        <taxon>Rodentia</taxon>
        <taxon>Myomorpha</taxon>
        <taxon>Muroidea</taxon>
        <taxon>Muridae</taxon>
        <taxon>Murinae</taxon>
        <taxon>Mus</taxon>
        <taxon>Mus</taxon>
    </lineage>
</organism>
<comment type="function">
    <text evidence="3 4 6">Specifically deglycosylates the denatured form of N-linked glycoproteins in the cytoplasm and assists their proteasome-mediated degradation. Cleaves the beta-aspartyl-glucosamine (GlcNAc) of the glycan and the amide side chain of Asn, converting Asn to Asp. Prefers proteins containing high-mannose over those bearing complex type oligosaccharides. Can recognize misfolded proteins in the endoplasmic reticulum that are exported to the cytosol to be destroyed and deglycosylate them, while it has no activity toward native proteins. Deglycosylation is a prerequisite for subsequent proteasome-mediated degradation of some, but not all, misfolded glycoproteins.</text>
</comment>
<comment type="catalytic activity">
    <reaction>
        <text>Hydrolysis of an N(4)-(acetyl-beta-D-glucosaminyl)asparagine residue in which the glucosamine residue may be further glycosylated, to yield a (substituted) N-acetyl-beta-D-glucosaminylamine and a peptide containing an aspartate residue.</text>
        <dbReference type="EC" id="3.5.1.52"/>
    </reaction>
</comment>
<comment type="cofactor">
    <cofactor evidence="10">
        <name>Zn(2+)</name>
        <dbReference type="ChEBI" id="CHEBI:29105"/>
    </cofactor>
    <text evidence="10">Binds 1 zinc ion per subunit.</text>
</comment>
<comment type="activity regulation">
    <text evidence="7">Inhibited by Z-VAD-fmk, a well-known caspase inhibitor, which inhibits enzyme activity through covalent binding of the carbohydrate to the single Cys-306 residue.</text>
</comment>
<comment type="biophysicochemical properties">
    <kinetics>
        <KM evidence="12">114 uM for fetuin glycopeptide I</KM>
        <Vmax evidence="12">0.0964 nmol/min/mg enzyme with fetuin glycopeptide I as substrate</Vmax>
    </kinetics>
</comment>
<comment type="subunit">
    <text evidence="3 6 8 9 10 11">Component of a complex required to couple retrotranslocation, ubiquitination and deglycosylation composed of NGLY1, SAKS1, AMFR, VCP and RAD23B. Interacts with the proteasome components RAD23B and PSMC1. Interacts with directly with VCP. Interacts with DERL1, bringing it close to the endoplasmic reticulum membrane. Interacts with SAKS1.</text>
</comment>
<comment type="interaction">
    <interactant intactId="EBI-3648128">
        <id>Q9JI78</id>
    </interactant>
    <interactant intactId="EBI-3648125">
        <id>Q9R049</id>
        <label>Amfr</label>
    </interactant>
    <organismsDiffer>false</organismsDiffer>
    <experiments>5</experiments>
</comment>
<comment type="interaction">
    <interactant intactId="EBI-3648128">
        <id>Q9JI78</id>
    </interactant>
    <interactant intactId="EBI-80597">
        <id>Q01853</id>
        <label>Vcp</label>
    </interactant>
    <organismsDiffer>false</organismsDiffer>
    <experiments>9</experiments>
</comment>
<comment type="interaction">
    <interactant intactId="EBI-3648128">
        <id>Q9JI78</id>
    </interactant>
    <interactant intactId="EBI-746453">
        <id>P54725</id>
        <label>RAD23A</label>
    </interactant>
    <organismsDiffer>true</organismsDiffer>
    <experiments>2</experiments>
</comment>
<comment type="subcellular location">
    <subcellularLocation>
        <location evidence="3 4 8">Cytoplasm</location>
    </subcellularLocation>
</comment>
<comment type="tissue specificity">
    <text evidence="3 5">Ubiquitously expressed with highest level in testis.</text>
</comment>
<comment type="domain">
    <text evidence="11">The PUB domain mediates the interaction with VCP.</text>
</comment>
<comment type="similarity">
    <text evidence="2">Belongs to the transglutaminase-like superfamily. PNGase family.</text>
</comment>
<keyword id="KW-0002">3D-structure</keyword>
<keyword id="KW-0007">Acetylation</keyword>
<keyword id="KW-0963">Cytoplasm</keyword>
<keyword id="KW-0378">Hydrolase</keyword>
<keyword id="KW-0479">Metal-binding</keyword>
<keyword id="KW-1185">Reference proteome</keyword>
<keyword id="KW-0862">Zinc</keyword>
<reference key="1">
    <citation type="journal article" date="2000" name="J. Cell Biol.">
        <title>PNG1, a yeast gene encoding a highly conserved peptide:N-glycanase.</title>
        <authorList>
            <person name="Suzuki T."/>
            <person name="Park H."/>
            <person name="Hollingsworth N.M."/>
            <person name="Sternglanz R."/>
            <person name="Lennarz W.J."/>
        </authorList>
    </citation>
    <scope>NUCLEOTIDE SEQUENCE [MRNA]</scope>
</reference>
<reference key="2">
    <citation type="journal article" date="2003" name="Biochem. Biophys. Res. Commun.">
        <title>Ngly1, a mouse gene encoding a deglycosylating enzyme implicated in proteasomal degradation: expression, genomic organization, and chromosomal mapping.</title>
        <authorList>
            <person name="Suzuki T."/>
            <person name="Kwofie M.A."/>
            <person name="Lennarz W.J."/>
        </authorList>
    </citation>
    <scope>NUCLEOTIDE SEQUENCE [GENOMIC DNA]</scope>
    <scope>TISSUE SPECIFICITY</scope>
    <source>
        <strain>129/SvJ</strain>
    </source>
</reference>
<reference key="3">
    <citation type="journal article" date="2005" name="Science">
        <title>The transcriptional landscape of the mammalian genome.</title>
        <authorList>
            <person name="Carninci P."/>
            <person name="Kasukawa T."/>
            <person name="Katayama S."/>
            <person name="Gough J."/>
            <person name="Frith M.C."/>
            <person name="Maeda N."/>
            <person name="Oyama R."/>
            <person name="Ravasi T."/>
            <person name="Lenhard B."/>
            <person name="Wells C."/>
            <person name="Kodzius R."/>
            <person name="Shimokawa K."/>
            <person name="Bajic V.B."/>
            <person name="Brenner S.E."/>
            <person name="Batalov S."/>
            <person name="Forrest A.R."/>
            <person name="Zavolan M."/>
            <person name="Davis M.J."/>
            <person name="Wilming L.G."/>
            <person name="Aidinis V."/>
            <person name="Allen J.E."/>
            <person name="Ambesi-Impiombato A."/>
            <person name="Apweiler R."/>
            <person name="Aturaliya R.N."/>
            <person name="Bailey T.L."/>
            <person name="Bansal M."/>
            <person name="Baxter L."/>
            <person name="Beisel K.W."/>
            <person name="Bersano T."/>
            <person name="Bono H."/>
            <person name="Chalk A.M."/>
            <person name="Chiu K.P."/>
            <person name="Choudhary V."/>
            <person name="Christoffels A."/>
            <person name="Clutterbuck D.R."/>
            <person name="Crowe M.L."/>
            <person name="Dalla E."/>
            <person name="Dalrymple B.P."/>
            <person name="de Bono B."/>
            <person name="Della Gatta G."/>
            <person name="di Bernardo D."/>
            <person name="Down T."/>
            <person name="Engstrom P."/>
            <person name="Fagiolini M."/>
            <person name="Faulkner G."/>
            <person name="Fletcher C.F."/>
            <person name="Fukushima T."/>
            <person name="Furuno M."/>
            <person name="Futaki S."/>
            <person name="Gariboldi M."/>
            <person name="Georgii-Hemming P."/>
            <person name="Gingeras T.R."/>
            <person name="Gojobori T."/>
            <person name="Green R.E."/>
            <person name="Gustincich S."/>
            <person name="Harbers M."/>
            <person name="Hayashi Y."/>
            <person name="Hensch T.K."/>
            <person name="Hirokawa N."/>
            <person name="Hill D."/>
            <person name="Huminiecki L."/>
            <person name="Iacono M."/>
            <person name="Ikeo K."/>
            <person name="Iwama A."/>
            <person name="Ishikawa T."/>
            <person name="Jakt M."/>
            <person name="Kanapin A."/>
            <person name="Katoh M."/>
            <person name="Kawasawa Y."/>
            <person name="Kelso J."/>
            <person name="Kitamura H."/>
            <person name="Kitano H."/>
            <person name="Kollias G."/>
            <person name="Krishnan S.P."/>
            <person name="Kruger A."/>
            <person name="Kummerfeld S.K."/>
            <person name="Kurochkin I.V."/>
            <person name="Lareau L.F."/>
            <person name="Lazarevic D."/>
            <person name="Lipovich L."/>
            <person name="Liu J."/>
            <person name="Liuni S."/>
            <person name="McWilliam S."/>
            <person name="Madan Babu M."/>
            <person name="Madera M."/>
            <person name="Marchionni L."/>
            <person name="Matsuda H."/>
            <person name="Matsuzawa S."/>
            <person name="Miki H."/>
            <person name="Mignone F."/>
            <person name="Miyake S."/>
            <person name="Morris K."/>
            <person name="Mottagui-Tabar S."/>
            <person name="Mulder N."/>
            <person name="Nakano N."/>
            <person name="Nakauchi H."/>
            <person name="Ng P."/>
            <person name="Nilsson R."/>
            <person name="Nishiguchi S."/>
            <person name="Nishikawa S."/>
            <person name="Nori F."/>
            <person name="Ohara O."/>
            <person name="Okazaki Y."/>
            <person name="Orlando V."/>
            <person name="Pang K.C."/>
            <person name="Pavan W.J."/>
            <person name="Pavesi G."/>
            <person name="Pesole G."/>
            <person name="Petrovsky N."/>
            <person name="Piazza S."/>
            <person name="Reed J."/>
            <person name="Reid J.F."/>
            <person name="Ring B.Z."/>
            <person name="Ringwald M."/>
            <person name="Rost B."/>
            <person name="Ruan Y."/>
            <person name="Salzberg S.L."/>
            <person name="Sandelin A."/>
            <person name="Schneider C."/>
            <person name="Schoenbach C."/>
            <person name="Sekiguchi K."/>
            <person name="Semple C.A."/>
            <person name="Seno S."/>
            <person name="Sessa L."/>
            <person name="Sheng Y."/>
            <person name="Shibata Y."/>
            <person name="Shimada H."/>
            <person name="Shimada K."/>
            <person name="Silva D."/>
            <person name="Sinclair B."/>
            <person name="Sperling S."/>
            <person name="Stupka E."/>
            <person name="Sugiura K."/>
            <person name="Sultana R."/>
            <person name="Takenaka Y."/>
            <person name="Taki K."/>
            <person name="Tammoja K."/>
            <person name="Tan S.L."/>
            <person name="Tang S."/>
            <person name="Taylor M.S."/>
            <person name="Tegner J."/>
            <person name="Teichmann S.A."/>
            <person name="Ueda H.R."/>
            <person name="van Nimwegen E."/>
            <person name="Verardo R."/>
            <person name="Wei C.L."/>
            <person name="Yagi K."/>
            <person name="Yamanishi H."/>
            <person name="Zabarovsky E."/>
            <person name="Zhu S."/>
            <person name="Zimmer A."/>
            <person name="Hide W."/>
            <person name="Bult C."/>
            <person name="Grimmond S.M."/>
            <person name="Teasdale R.D."/>
            <person name="Liu E.T."/>
            <person name="Brusic V."/>
            <person name="Quackenbush J."/>
            <person name="Wahlestedt C."/>
            <person name="Mattick J.S."/>
            <person name="Hume D.A."/>
            <person name="Kai C."/>
            <person name="Sasaki D."/>
            <person name="Tomaru Y."/>
            <person name="Fukuda S."/>
            <person name="Kanamori-Katayama M."/>
            <person name="Suzuki M."/>
            <person name="Aoki J."/>
            <person name="Arakawa T."/>
            <person name="Iida J."/>
            <person name="Imamura K."/>
            <person name="Itoh M."/>
            <person name="Kato T."/>
            <person name="Kawaji H."/>
            <person name="Kawagashira N."/>
            <person name="Kawashima T."/>
            <person name="Kojima M."/>
            <person name="Kondo S."/>
            <person name="Konno H."/>
            <person name="Nakano K."/>
            <person name="Ninomiya N."/>
            <person name="Nishio T."/>
            <person name="Okada M."/>
            <person name="Plessy C."/>
            <person name="Shibata K."/>
            <person name="Shiraki T."/>
            <person name="Suzuki S."/>
            <person name="Tagami M."/>
            <person name="Waki K."/>
            <person name="Watahiki A."/>
            <person name="Okamura-Oho Y."/>
            <person name="Suzuki H."/>
            <person name="Kawai J."/>
            <person name="Hayashizaki Y."/>
        </authorList>
    </citation>
    <scope>NUCLEOTIDE SEQUENCE [LARGE SCALE MRNA]</scope>
    <source>
        <strain>C57BL/6J</strain>
        <tissue>Head</tissue>
    </source>
</reference>
<reference key="4">
    <citation type="journal article" date="2004" name="Genome Res.">
        <title>The status, quality, and expansion of the NIH full-length cDNA project: the Mammalian Gene Collection (MGC).</title>
        <authorList>
            <consortium name="The MGC Project Team"/>
        </authorList>
    </citation>
    <scope>NUCLEOTIDE SEQUENCE [LARGE SCALE MRNA]</scope>
    <source>
        <tissue>Eye</tissue>
    </source>
</reference>
<reference key="5">
    <citation type="journal article" date="1994" name="J. Biol. Chem.">
        <title>Purification and enzymatic properties of peptide:N-glycanase from C3H mouse-derived L-929 fibroblast cells. Possible widespread occurrence of post-translational remodification of proteins by N-deglycosylation.</title>
        <authorList>
            <person name="Suzuki T."/>
            <person name="Seko A."/>
            <person name="Kitajima K."/>
            <person name="Inoue Y."/>
            <person name="Inoue S."/>
        </authorList>
    </citation>
    <scope>BIOPHYSICOCHEMICAL PROPERTIES</scope>
</reference>
<reference key="6">
    <citation type="journal article" date="2001" name="Proc. Natl. Acad. Sci. U.S.A.">
        <title>Identification of proteins that interact with mammalian peptide:N-glycanase and implicate this hydrolase in the proteasome-dependent pathway for protein degradation.</title>
        <authorList>
            <person name="Park H."/>
            <person name="Suzuki T."/>
            <person name="Lennarz W.J."/>
        </authorList>
    </citation>
    <scope>FUNCTION</scope>
    <scope>SUBCELLULAR LOCATION</scope>
    <scope>TISSUE SPECIFICITY</scope>
    <scope>INTERACTION WITH RAD23B; PSMC1 AND SAKS1</scope>
</reference>
<reference key="7">
    <citation type="journal article" date="2003" name="EMBO J.">
        <title>A role for N-glycanase in the cytosolic turnover of glycoproteins.</title>
        <authorList>
            <person name="Hirsch C."/>
            <person name="Blom D."/>
            <person name="Ploegh H.L."/>
        </authorList>
    </citation>
    <scope>FUNCTION</scope>
    <scope>SUBCELLULAR LOCATION</scope>
    <scope>MUTAGENESIS OF CYS-306</scope>
</reference>
<reference key="8">
    <citation type="journal article" date="2004" name="Chem. Biol.">
        <title>Using a small molecule inhibitor of peptide: N-glycanase to probe its role in glycoprotein turnover.</title>
        <authorList>
            <person name="Misaghi S."/>
            <person name="Pacold M.E."/>
            <person name="Blom D."/>
            <person name="Ploegh H.L."/>
            <person name="Korbel G.A."/>
        </authorList>
    </citation>
    <scope>ACTIVITY REGULATION</scope>
</reference>
<reference key="9">
    <citation type="journal article" date="2004" name="Proc. Natl. Acad. Sci. U.S.A.">
        <title>A complex between peptide:N-glycanase and two proteasome-linked proteins suggests a mechanism for the degradation of misfolded glycoproteins.</title>
        <authorList>
            <person name="Katiyar S."/>
            <person name="Li G."/>
            <person name="Lennarz W.J."/>
        </authorList>
    </citation>
    <scope>FUNCTION</scope>
    <scope>INTERACTION WITH RAD23B AND PSMC1</scope>
</reference>
<reference key="10">
    <citation type="journal article" date="2005" name="Mol. Biol. Cell">
        <title>The retrotranslocation protein derlin-1 binds peptide:N-glycanase to the endoplasmic reticulum.</title>
        <authorList>
            <person name="Katiyar S."/>
            <person name="Joshi S."/>
            <person name="Lennarz W.J."/>
        </authorList>
    </citation>
    <scope>SUBCELLULAR LOCATION</scope>
    <scope>INTERACTION WITH DERL1</scope>
</reference>
<reference key="11">
    <citation type="journal article" date="2005" name="Proc. Natl. Acad. Sci. U.S.A.">
        <title>Multiple modes of interaction of the deglycosylation enzyme, mouse peptide N-glycanase, with the proteasome.</title>
        <authorList>
            <person name="Li G."/>
            <person name="Zhou X."/>
            <person name="Zhao G."/>
            <person name="Schindelin H."/>
            <person name="Lennarz W.J."/>
        </authorList>
    </citation>
    <scope>INTERACTION WITH PSMC1; RAD23B AND VCP</scope>
</reference>
<reference key="12">
    <citation type="journal article" date="2006" name="Proc. Natl. Acad. Sci. U.S.A.">
        <authorList>
            <person name="Li G."/>
            <person name="Zhou X."/>
            <person name="Zhao G."/>
            <person name="Schindelin H."/>
            <person name="Lennarz W.J."/>
        </authorList>
    </citation>
    <scope>ERRATUM OF PUBMED:16249333</scope>
</reference>
<reference key="13">
    <citation type="journal article" date="2006" name="Proc. Natl. Acad. Sci. U.S.A.">
        <title>The AAA ATPase p97 links peptide N-glycanase to the endoplasmic reticulum-associated E3 ligase autocrine motility factor receptor.</title>
        <authorList>
            <person name="Li G."/>
            <person name="Zhao G."/>
            <person name="Zhou X."/>
            <person name="Schindelin H."/>
            <person name="Lennarz W.J."/>
        </authorList>
    </citation>
    <scope>INTERACTION WITH AMFR; PSMC1; SAKS1; RAD23B AND VCP</scope>
    <scope>DOMAIN</scope>
    <scope>MUTAGENESIS OF ASN-41; ASN-58 AND 79-GLY-PHE-80</scope>
</reference>
<reference key="14">
    <citation type="journal article" date="2010" name="Cell">
        <title>A tissue-specific atlas of mouse protein phosphorylation and expression.</title>
        <authorList>
            <person name="Huttlin E.L."/>
            <person name="Jedrychowski M.P."/>
            <person name="Elias J.E."/>
            <person name="Goswami T."/>
            <person name="Rad R."/>
            <person name="Beausoleil S.A."/>
            <person name="Villen J."/>
            <person name="Haas W."/>
            <person name="Sowa M.E."/>
            <person name="Gygi S.P."/>
        </authorList>
    </citation>
    <scope>IDENTIFICATION BY MASS SPECTROMETRY [LARGE SCALE ANALYSIS]</scope>
    <source>
        <tissue>Brain</tissue>
        <tissue>Brown adipose tissue</tissue>
        <tissue>Heart</tissue>
        <tissue>Kidney</tissue>
        <tissue>Liver</tissue>
        <tissue>Lung</tissue>
        <tissue>Pancreas</tissue>
        <tissue>Spleen</tissue>
        <tissue>Testis</tissue>
    </source>
</reference>
<reference key="15">
    <citation type="journal article" date="2006" name="J. Biol. Chem.">
        <title>Structure of the mouse peptide N-glycanase-HR23 complex suggests co-evolution of the endoplasmic reticulum-associated degradation and DNA repair pathways.</title>
        <authorList>
            <person name="Zhao G."/>
            <person name="Zhou X."/>
            <person name="Wang L."/>
            <person name="Li G."/>
            <person name="Kisker C."/>
            <person name="Lennarz W.J."/>
            <person name="Schindelin H."/>
        </authorList>
    </citation>
    <scope>X-RAY CRYSTALLOGRAPHY (2.8 ANGSTROMS) OF 164-450 IN COMPLEX WITH RAD23 AND Z-VAD-FMK</scope>
    <scope>COFACTOR</scope>
    <scope>ZINC-BINDING</scope>
</reference>